<protein>
    <recommendedName>
        <fullName evidence="1">Bifunctional protein GlmU</fullName>
    </recommendedName>
    <domain>
        <recommendedName>
            <fullName evidence="1">UDP-N-acetylglucosamine pyrophosphorylase</fullName>
            <ecNumber evidence="1">2.7.7.23</ecNumber>
        </recommendedName>
        <alternativeName>
            <fullName evidence="1">N-acetylglucosamine-1-phosphate uridyltransferase</fullName>
        </alternativeName>
    </domain>
    <domain>
        <recommendedName>
            <fullName evidence="1">Glucosamine-1-phosphate N-acetyltransferase</fullName>
            <ecNumber evidence="1">2.3.1.157</ecNumber>
        </recommendedName>
    </domain>
</protein>
<reference key="1">
    <citation type="journal article" date="2003" name="Mol. Microbiol.">
        <title>Genome-based analysis of virulence genes in a non-biofilm-forming Staphylococcus epidermidis strain (ATCC 12228).</title>
        <authorList>
            <person name="Zhang Y.-Q."/>
            <person name="Ren S.-X."/>
            <person name="Li H.-L."/>
            <person name="Wang Y.-X."/>
            <person name="Fu G."/>
            <person name="Yang J."/>
            <person name="Qin Z.-Q."/>
            <person name="Miao Y.-G."/>
            <person name="Wang W.-Y."/>
            <person name="Chen R.-S."/>
            <person name="Shen Y."/>
            <person name="Chen Z."/>
            <person name="Yuan Z.-H."/>
            <person name="Zhao G.-P."/>
            <person name="Qu D."/>
            <person name="Danchin A."/>
            <person name="Wen Y.-M."/>
        </authorList>
    </citation>
    <scope>NUCLEOTIDE SEQUENCE [LARGE SCALE GENOMIC DNA]</scope>
    <source>
        <strain>ATCC 12228 / FDA PCI 1200</strain>
    </source>
</reference>
<comment type="function">
    <text evidence="1">Catalyzes the last two sequential reactions in the de novo biosynthetic pathway for UDP-N-acetylglucosamine (UDP-GlcNAc). The C-terminal domain catalyzes the transfer of acetyl group from acetyl coenzyme A to glucosamine-1-phosphate (GlcN-1-P) to produce N-acetylglucosamine-1-phosphate (GlcNAc-1-P), which is converted into UDP-GlcNAc by the transfer of uridine 5-monophosphate (from uridine 5-triphosphate), a reaction catalyzed by the N-terminal domain.</text>
</comment>
<comment type="catalytic activity">
    <reaction evidence="1">
        <text>alpha-D-glucosamine 1-phosphate + acetyl-CoA = N-acetyl-alpha-D-glucosamine 1-phosphate + CoA + H(+)</text>
        <dbReference type="Rhea" id="RHEA:13725"/>
        <dbReference type="ChEBI" id="CHEBI:15378"/>
        <dbReference type="ChEBI" id="CHEBI:57287"/>
        <dbReference type="ChEBI" id="CHEBI:57288"/>
        <dbReference type="ChEBI" id="CHEBI:57776"/>
        <dbReference type="ChEBI" id="CHEBI:58516"/>
        <dbReference type="EC" id="2.3.1.157"/>
    </reaction>
</comment>
<comment type="catalytic activity">
    <reaction evidence="1">
        <text>N-acetyl-alpha-D-glucosamine 1-phosphate + UTP + H(+) = UDP-N-acetyl-alpha-D-glucosamine + diphosphate</text>
        <dbReference type="Rhea" id="RHEA:13509"/>
        <dbReference type="ChEBI" id="CHEBI:15378"/>
        <dbReference type="ChEBI" id="CHEBI:33019"/>
        <dbReference type="ChEBI" id="CHEBI:46398"/>
        <dbReference type="ChEBI" id="CHEBI:57705"/>
        <dbReference type="ChEBI" id="CHEBI:57776"/>
        <dbReference type="EC" id="2.7.7.23"/>
    </reaction>
</comment>
<comment type="cofactor">
    <cofactor evidence="1">
        <name>Mg(2+)</name>
        <dbReference type="ChEBI" id="CHEBI:18420"/>
    </cofactor>
    <text evidence="1">Binds 1 Mg(2+) ion per subunit.</text>
</comment>
<comment type="pathway">
    <text evidence="1">Nucleotide-sugar biosynthesis; UDP-N-acetyl-alpha-D-glucosamine biosynthesis; N-acetyl-alpha-D-glucosamine 1-phosphate from alpha-D-glucosamine 6-phosphate (route II): step 2/2.</text>
</comment>
<comment type="pathway">
    <text evidence="1">Nucleotide-sugar biosynthesis; UDP-N-acetyl-alpha-D-glucosamine biosynthesis; UDP-N-acetyl-alpha-D-glucosamine from N-acetyl-alpha-D-glucosamine 1-phosphate: step 1/1.</text>
</comment>
<comment type="pathway">
    <text evidence="1">Bacterial outer membrane biogenesis; LPS lipid A biosynthesis.</text>
</comment>
<comment type="subunit">
    <text evidence="1">Homotrimer.</text>
</comment>
<comment type="subcellular location">
    <subcellularLocation>
        <location evidence="1">Cytoplasm</location>
    </subcellularLocation>
</comment>
<comment type="similarity">
    <text evidence="1">In the N-terminal section; belongs to the N-acetylglucosamine-1-phosphate uridyltransferase family.</text>
</comment>
<comment type="similarity">
    <text evidence="1">In the C-terminal section; belongs to the transferase hexapeptide repeat family.</text>
</comment>
<evidence type="ECO:0000255" key="1">
    <source>
        <dbReference type="HAMAP-Rule" id="MF_01631"/>
    </source>
</evidence>
<keyword id="KW-0012">Acyltransferase</keyword>
<keyword id="KW-0133">Cell shape</keyword>
<keyword id="KW-0961">Cell wall biogenesis/degradation</keyword>
<keyword id="KW-0963">Cytoplasm</keyword>
<keyword id="KW-0460">Magnesium</keyword>
<keyword id="KW-0479">Metal-binding</keyword>
<keyword id="KW-0511">Multifunctional enzyme</keyword>
<keyword id="KW-0548">Nucleotidyltransferase</keyword>
<keyword id="KW-0573">Peptidoglycan synthesis</keyword>
<keyword id="KW-0677">Repeat</keyword>
<keyword id="KW-0808">Transferase</keyword>
<gene>
    <name evidence="1" type="primary">glmU</name>
    <name type="synonym">gcaD</name>
    <name type="ordered locus">SE_2284</name>
</gene>
<dbReference type="EC" id="2.7.7.23" evidence="1"/>
<dbReference type="EC" id="2.3.1.157" evidence="1"/>
<dbReference type="EMBL" id="AE015929">
    <property type="protein sequence ID" value="AAO05926.1"/>
    <property type="molecule type" value="Genomic_DNA"/>
</dbReference>
<dbReference type="RefSeq" id="NP_765839.1">
    <property type="nucleotide sequence ID" value="NC_004461.1"/>
</dbReference>
<dbReference type="RefSeq" id="WP_001832214.1">
    <property type="nucleotide sequence ID" value="NZ_WBME01000023.1"/>
</dbReference>
<dbReference type="SMR" id="Q8CMT0"/>
<dbReference type="GeneID" id="50019590"/>
<dbReference type="KEGG" id="sep:SE_2284"/>
<dbReference type="PATRIC" id="fig|176280.10.peg.2227"/>
<dbReference type="eggNOG" id="COG1207">
    <property type="taxonomic scope" value="Bacteria"/>
</dbReference>
<dbReference type="HOGENOM" id="CLU_029499_15_2_9"/>
<dbReference type="OrthoDB" id="9775031at2"/>
<dbReference type="UniPathway" id="UPA00113">
    <property type="reaction ID" value="UER00532"/>
</dbReference>
<dbReference type="UniPathway" id="UPA00113">
    <property type="reaction ID" value="UER00533"/>
</dbReference>
<dbReference type="UniPathway" id="UPA00973"/>
<dbReference type="Proteomes" id="UP000001411">
    <property type="component" value="Chromosome"/>
</dbReference>
<dbReference type="GO" id="GO:0005737">
    <property type="term" value="C:cytoplasm"/>
    <property type="evidence" value="ECO:0007669"/>
    <property type="project" value="UniProtKB-SubCell"/>
</dbReference>
<dbReference type="GO" id="GO:0016020">
    <property type="term" value="C:membrane"/>
    <property type="evidence" value="ECO:0007669"/>
    <property type="project" value="GOC"/>
</dbReference>
<dbReference type="GO" id="GO:0019134">
    <property type="term" value="F:glucosamine-1-phosphate N-acetyltransferase activity"/>
    <property type="evidence" value="ECO:0007669"/>
    <property type="project" value="UniProtKB-UniRule"/>
</dbReference>
<dbReference type="GO" id="GO:0000287">
    <property type="term" value="F:magnesium ion binding"/>
    <property type="evidence" value="ECO:0007669"/>
    <property type="project" value="UniProtKB-UniRule"/>
</dbReference>
<dbReference type="GO" id="GO:0003977">
    <property type="term" value="F:UDP-N-acetylglucosamine diphosphorylase activity"/>
    <property type="evidence" value="ECO:0007669"/>
    <property type="project" value="UniProtKB-UniRule"/>
</dbReference>
<dbReference type="GO" id="GO:0000902">
    <property type="term" value="P:cell morphogenesis"/>
    <property type="evidence" value="ECO:0007669"/>
    <property type="project" value="UniProtKB-UniRule"/>
</dbReference>
<dbReference type="GO" id="GO:0071555">
    <property type="term" value="P:cell wall organization"/>
    <property type="evidence" value="ECO:0007669"/>
    <property type="project" value="UniProtKB-KW"/>
</dbReference>
<dbReference type="GO" id="GO:0009245">
    <property type="term" value="P:lipid A biosynthetic process"/>
    <property type="evidence" value="ECO:0007669"/>
    <property type="project" value="UniProtKB-UniRule"/>
</dbReference>
<dbReference type="GO" id="GO:0009252">
    <property type="term" value="P:peptidoglycan biosynthetic process"/>
    <property type="evidence" value="ECO:0007669"/>
    <property type="project" value="UniProtKB-UniRule"/>
</dbReference>
<dbReference type="GO" id="GO:0008360">
    <property type="term" value="P:regulation of cell shape"/>
    <property type="evidence" value="ECO:0007669"/>
    <property type="project" value="UniProtKB-KW"/>
</dbReference>
<dbReference type="GO" id="GO:0006048">
    <property type="term" value="P:UDP-N-acetylglucosamine biosynthetic process"/>
    <property type="evidence" value="ECO:0007669"/>
    <property type="project" value="UniProtKB-UniPathway"/>
</dbReference>
<dbReference type="CDD" id="cd02540">
    <property type="entry name" value="GT2_GlmU_N_bac"/>
    <property type="match status" value="1"/>
</dbReference>
<dbReference type="CDD" id="cd03353">
    <property type="entry name" value="LbH_GlmU_C"/>
    <property type="match status" value="1"/>
</dbReference>
<dbReference type="Gene3D" id="2.160.10.10">
    <property type="entry name" value="Hexapeptide repeat proteins"/>
    <property type="match status" value="1"/>
</dbReference>
<dbReference type="Gene3D" id="3.90.550.10">
    <property type="entry name" value="Spore Coat Polysaccharide Biosynthesis Protein SpsA, Chain A"/>
    <property type="match status" value="1"/>
</dbReference>
<dbReference type="HAMAP" id="MF_01631">
    <property type="entry name" value="GlmU"/>
    <property type="match status" value="1"/>
</dbReference>
<dbReference type="InterPro" id="IPR005882">
    <property type="entry name" value="Bifunctional_GlmU"/>
</dbReference>
<dbReference type="InterPro" id="IPR050065">
    <property type="entry name" value="GlmU-like"/>
</dbReference>
<dbReference type="InterPro" id="IPR038009">
    <property type="entry name" value="GlmU_C_LbH"/>
</dbReference>
<dbReference type="InterPro" id="IPR001451">
    <property type="entry name" value="Hexapep"/>
</dbReference>
<dbReference type="InterPro" id="IPR018357">
    <property type="entry name" value="Hexapep_transf_CS"/>
</dbReference>
<dbReference type="InterPro" id="IPR005835">
    <property type="entry name" value="NTP_transferase_dom"/>
</dbReference>
<dbReference type="InterPro" id="IPR029044">
    <property type="entry name" value="Nucleotide-diphossugar_trans"/>
</dbReference>
<dbReference type="InterPro" id="IPR011004">
    <property type="entry name" value="Trimer_LpxA-like_sf"/>
</dbReference>
<dbReference type="NCBIfam" id="TIGR01173">
    <property type="entry name" value="glmU"/>
    <property type="match status" value="1"/>
</dbReference>
<dbReference type="NCBIfam" id="NF010934">
    <property type="entry name" value="PRK14354.1"/>
    <property type="match status" value="1"/>
</dbReference>
<dbReference type="PANTHER" id="PTHR43584:SF3">
    <property type="entry name" value="BIFUNCTIONAL PROTEIN GLMU"/>
    <property type="match status" value="1"/>
</dbReference>
<dbReference type="PANTHER" id="PTHR43584">
    <property type="entry name" value="NUCLEOTIDYL TRANSFERASE"/>
    <property type="match status" value="1"/>
</dbReference>
<dbReference type="Pfam" id="PF00132">
    <property type="entry name" value="Hexapep"/>
    <property type="match status" value="1"/>
</dbReference>
<dbReference type="Pfam" id="PF00483">
    <property type="entry name" value="NTP_transferase"/>
    <property type="match status" value="1"/>
</dbReference>
<dbReference type="SUPFAM" id="SSF53448">
    <property type="entry name" value="Nucleotide-diphospho-sugar transferases"/>
    <property type="match status" value="1"/>
</dbReference>
<dbReference type="SUPFAM" id="SSF51161">
    <property type="entry name" value="Trimeric LpxA-like enzymes"/>
    <property type="match status" value="1"/>
</dbReference>
<dbReference type="PROSITE" id="PS00101">
    <property type="entry name" value="HEXAPEP_TRANSFERASES"/>
    <property type="match status" value="1"/>
</dbReference>
<feature type="chain" id="PRO_0000068716" description="Bifunctional protein GlmU">
    <location>
        <begin position="1"/>
        <end position="451"/>
    </location>
</feature>
<feature type="region of interest" description="Pyrophosphorylase" evidence="1">
    <location>
        <begin position="1"/>
        <end position="229"/>
    </location>
</feature>
<feature type="region of interest" description="Linker" evidence="1">
    <location>
        <begin position="230"/>
        <end position="250"/>
    </location>
</feature>
<feature type="region of interest" description="N-acetyltransferase" evidence="1">
    <location>
        <begin position="251"/>
        <end position="451"/>
    </location>
</feature>
<feature type="active site" description="Proton acceptor" evidence="1">
    <location>
        <position position="362"/>
    </location>
</feature>
<feature type="binding site" evidence="1">
    <location>
        <begin position="8"/>
        <end position="11"/>
    </location>
    <ligand>
        <name>UDP-N-acetyl-alpha-D-glucosamine</name>
        <dbReference type="ChEBI" id="CHEBI:57705"/>
    </ligand>
</feature>
<feature type="binding site" evidence="1">
    <location>
        <position position="22"/>
    </location>
    <ligand>
        <name>UDP-N-acetyl-alpha-D-glucosamine</name>
        <dbReference type="ChEBI" id="CHEBI:57705"/>
    </ligand>
</feature>
<feature type="binding site" evidence="1">
    <location>
        <position position="72"/>
    </location>
    <ligand>
        <name>UDP-N-acetyl-alpha-D-glucosamine</name>
        <dbReference type="ChEBI" id="CHEBI:57705"/>
    </ligand>
</feature>
<feature type="binding site" evidence="1">
    <location>
        <begin position="77"/>
        <end position="78"/>
    </location>
    <ligand>
        <name>UDP-N-acetyl-alpha-D-glucosamine</name>
        <dbReference type="ChEBI" id="CHEBI:57705"/>
    </ligand>
</feature>
<feature type="binding site" evidence="1">
    <location>
        <position position="102"/>
    </location>
    <ligand>
        <name>Mg(2+)</name>
        <dbReference type="ChEBI" id="CHEBI:18420"/>
    </ligand>
</feature>
<feature type="binding site" evidence="1">
    <location>
        <position position="139"/>
    </location>
    <ligand>
        <name>UDP-N-acetyl-alpha-D-glucosamine</name>
        <dbReference type="ChEBI" id="CHEBI:57705"/>
    </ligand>
</feature>
<feature type="binding site" evidence="1">
    <location>
        <position position="154"/>
    </location>
    <ligand>
        <name>UDP-N-acetyl-alpha-D-glucosamine</name>
        <dbReference type="ChEBI" id="CHEBI:57705"/>
    </ligand>
</feature>
<feature type="binding site" evidence="1">
    <location>
        <position position="227"/>
    </location>
    <ligand>
        <name>Mg(2+)</name>
        <dbReference type="ChEBI" id="CHEBI:18420"/>
    </ligand>
</feature>
<feature type="binding site" evidence="1">
    <location>
        <position position="227"/>
    </location>
    <ligand>
        <name>UDP-N-acetyl-alpha-D-glucosamine</name>
        <dbReference type="ChEBI" id="CHEBI:57705"/>
    </ligand>
</feature>
<feature type="binding site" evidence="1">
    <location>
        <position position="332"/>
    </location>
    <ligand>
        <name>UDP-N-acetyl-alpha-D-glucosamine</name>
        <dbReference type="ChEBI" id="CHEBI:57705"/>
    </ligand>
</feature>
<feature type="binding site" evidence="1">
    <location>
        <position position="350"/>
    </location>
    <ligand>
        <name>UDP-N-acetyl-alpha-D-glucosamine</name>
        <dbReference type="ChEBI" id="CHEBI:57705"/>
    </ligand>
</feature>
<feature type="binding site" evidence="1">
    <location>
        <position position="365"/>
    </location>
    <ligand>
        <name>UDP-N-acetyl-alpha-D-glucosamine</name>
        <dbReference type="ChEBI" id="CHEBI:57705"/>
    </ligand>
</feature>
<feature type="binding site" evidence="1">
    <location>
        <position position="376"/>
    </location>
    <ligand>
        <name>UDP-N-acetyl-alpha-D-glucosamine</name>
        <dbReference type="ChEBI" id="CHEBI:57705"/>
    </ligand>
</feature>
<feature type="binding site" evidence="1">
    <location>
        <begin position="385"/>
        <end position="386"/>
    </location>
    <ligand>
        <name>acetyl-CoA</name>
        <dbReference type="ChEBI" id="CHEBI:57288"/>
    </ligand>
</feature>
<feature type="binding site" evidence="1">
    <location>
        <position position="422"/>
    </location>
    <ligand>
        <name>acetyl-CoA</name>
        <dbReference type="ChEBI" id="CHEBI:57288"/>
    </ligand>
</feature>
<feature type="binding site" evidence="1">
    <location>
        <position position="439"/>
    </location>
    <ligand>
        <name>acetyl-CoA</name>
        <dbReference type="ChEBI" id="CHEBI:57288"/>
    </ligand>
</feature>
<organism>
    <name type="scientific">Staphylococcus epidermidis (strain ATCC 12228 / FDA PCI 1200)</name>
    <dbReference type="NCBI Taxonomy" id="176280"/>
    <lineage>
        <taxon>Bacteria</taxon>
        <taxon>Bacillati</taxon>
        <taxon>Bacillota</taxon>
        <taxon>Bacilli</taxon>
        <taxon>Bacillales</taxon>
        <taxon>Staphylococcaceae</taxon>
        <taxon>Staphylococcus</taxon>
    </lineage>
</organism>
<sequence>MQRHAIILAAGKGTRMKSKKYKVLHEVAGKPMVEHVLNNVKQAGVDQIVTIIGHGAESVKDTLGNQSLYSFQDKQLGTAHAVKMAHEHLADKEGTTLVVCGDTPLITYQTLQSLIEHHESTQSHVTVLSASTINPYGYGRIIRNHNGILERIVEEKDANDSERAIKEISSGIFAFNNRVLFEKLEQVKNDNAQGEYYLPDVLSLILKDGGKAEVYCTEDFDEIIGVNDRLMLSEAEKALQQRINRYHMENGVTIIDPSSTFIGTDVKIGIDTTIEPGVRIGGHTTIEEDVWIGQYSEINNSTIHSNANIKQSVINDSIVGENTTVGPFAQLRPGSNLGSEVKVGNFVEVKKADIKDGAKVSHLSYIGDAEIGERTNIGCGSITVNYDGANKFKTIVGKDAFIGCNTNLIAPVTVGNHTLIAAGSTITDNIPEDSLALARARQVNKEGYLKK</sequence>
<proteinExistence type="inferred from homology"/>
<accession>Q8CMT0</accession>
<name>GLMU_STAES</name>